<reference key="1">
    <citation type="journal article" date="2011" name="MBio">
        <title>Novel metabolic attributes of the genus Cyanothece, comprising a group of unicellular nitrogen-fixing Cyanobacteria.</title>
        <authorList>
            <person name="Bandyopadhyay A."/>
            <person name="Elvitigala T."/>
            <person name="Welsh E."/>
            <person name="Stockel J."/>
            <person name="Liberton M."/>
            <person name="Min H."/>
            <person name="Sherman L.A."/>
            <person name="Pakrasi H.B."/>
        </authorList>
    </citation>
    <scope>NUCLEOTIDE SEQUENCE [LARGE SCALE GENOMIC DNA]</scope>
    <source>
        <strain>PCC 7424</strain>
    </source>
</reference>
<accession>B7KEZ9</accession>
<gene>
    <name evidence="1" type="primary">ndhB</name>
    <name type="ordered locus">PCC7424_2025</name>
</gene>
<evidence type="ECO:0000255" key="1">
    <source>
        <dbReference type="HAMAP-Rule" id="MF_00445"/>
    </source>
</evidence>
<proteinExistence type="inferred from homology"/>
<dbReference type="EC" id="7.1.1.-" evidence="1"/>
<dbReference type="EMBL" id="CP001291">
    <property type="protein sequence ID" value="ACK70455.1"/>
    <property type="molecule type" value="Genomic_DNA"/>
</dbReference>
<dbReference type="RefSeq" id="WP_015954061.1">
    <property type="nucleotide sequence ID" value="NC_011729.1"/>
</dbReference>
<dbReference type="SMR" id="B7KEZ9"/>
<dbReference type="STRING" id="65393.PCC7424_2025"/>
<dbReference type="KEGG" id="cyc:PCC7424_2025"/>
<dbReference type="eggNOG" id="COG1007">
    <property type="taxonomic scope" value="Bacteria"/>
</dbReference>
<dbReference type="HOGENOM" id="CLU_007100_1_5_3"/>
<dbReference type="OrthoDB" id="9811718at2"/>
<dbReference type="Proteomes" id="UP000002384">
    <property type="component" value="Chromosome"/>
</dbReference>
<dbReference type="GO" id="GO:0031676">
    <property type="term" value="C:plasma membrane-derived thylakoid membrane"/>
    <property type="evidence" value="ECO:0007669"/>
    <property type="project" value="UniProtKB-SubCell"/>
</dbReference>
<dbReference type="GO" id="GO:0008137">
    <property type="term" value="F:NADH dehydrogenase (ubiquinone) activity"/>
    <property type="evidence" value="ECO:0007669"/>
    <property type="project" value="InterPro"/>
</dbReference>
<dbReference type="GO" id="GO:0048038">
    <property type="term" value="F:quinone binding"/>
    <property type="evidence" value="ECO:0007669"/>
    <property type="project" value="UniProtKB-KW"/>
</dbReference>
<dbReference type="GO" id="GO:0042773">
    <property type="term" value="P:ATP synthesis coupled electron transport"/>
    <property type="evidence" value="ECO:0007669"/>
    <property type="project" value="InterPro"/>
</dbReference>
<dbReference type="GO" id="GO:0019684">
    <property type="term" value="P:photosynthesis, light reaction"/>
    <property type="evidence" value="ECO:0007669"/>
    <property type="project" value="UniProtKB-UniRule"/>
</dbReference>
<dbReference type="HAMAP" id="MF_00445">
    <property type="entry name" value="NDH1_NuoN_1"/>
    <property type="match status" value="1"/>
</dbReference>
<dbReference type="InterPro" id="IPR010096">
    <property type="entry name" value="NADH-Q_OxRdtase_suN/2"/>
</dbReference>
<dbReference type="InterPro" id="IPR001750">
    <property type="entry name" value="ND/Mrp_TM"/>
</dbReference>
<dbReference type="InterPro" id="IPR045693">
    <property type="entry name" value="Ndh2_N"/>
</dbReference>
<dbReference type="NCBIfam" id="TIGR01770">
    <property type="entry name" value="NDH_I_N"/>
    <property type="match status" value="1"/>
</dbReference>
<dbReference type="NCBIfam" id="NF002701">
    <property type="entry name" value="PRK02504.1"/>
    <property type="match status" value="1"/>
</dbReference>
<dbReference type="PANTHER" id="PTHR22773">
    <property type="entry name" value="NADH DEHYDROGENASE"/>
    <property type="match status" value="1"/>
</dbReference>
<dbReference type="Pfam" id="PF19530">
    <property type="entry name" value="Ndh2_N"/>
    <property type="match status" value="1"/>
</dbReference>
<dbReference type="Pfam" id="PF00361">
    <property type="entry name" value="Proton_antipo_M"/>
    <property type="match status" value="1"/>
</dbReference>
<dbReference type="PRINTS" id="PR01434">
    <property type="entry name" value="NADHDHGNASE5"/>
</dbReference>
<feature type="chain" id="PRO_1000124730" description="NAD(P)H-quinone oxidoreductase subunit 2">
    <location>
        <begin position="1"/>
        <end position="514"/>
    </location>
</feature>
<feature type="transmembrane region" description="Helical" evidence="1">
    <location>
        <begin position="16"/>
        <end position="36"/>
    </location>
</feature>
<feature type="transmembrane region" description="Helical" evidence="1">
    <location>
        <begin position="43"/>
        <end position="63"/>
    </location>
</feature>
<feature type="transmembrane region" description="Helical" evidence="1">
    <location>
        <begin position="80"/>
        <end position="100"/>
    </location>
</feature>
<feature type="transmembrane region" description="Helical" evidence="1">
    <location>
        <begin position="110"/>
        <end position="130"/>
    </location>
</feature>
<feature type="transmembrane region" description="Helical" evidence="1">
    <location>
        <begin position="133"/>
        <end position="153"/>
    </location>
</feature>
<feature type="transmembrane region" description="Helical" evidence="1">
    <location>
        <begin position="168"/>
        <end position="188"/>
    </location>
</feature>
<feature type="transmembrane region" description="Helical" evidence="1">
    <location>
        <begin position="211"/>
        <end position="231"/>
    </location>
</feature>
<feature type="transmembrane region" description="Helical" evidence="1">
    <location>
        <begin position="245"/>
        <end position="265"/>
    </location>
</feature>
<feature type="transmembrane region" description="Helical" evidence="1">
    <location>
        <begin position="279"/>
        <end position="299"/>
    </location>
</feature>
<feature type="transmembrane region" description="Helical" evidence="1">
    <location>
        <begin position="307"/>
        <end position="327"/>
    </location>
</feature>
<feature type="transmembrane region" description="Helical" evidence="1">
    <location>
        <begin position="335"/>
        <end position="355"/>
    </location>
</feature>
<feature type="transmembrane region" description="Helical" evidence="1">
    <location>
        <begin position="379"/>
        <end position="399"/>
    </location>
</feature>
<feature type="transmembrane region" description="Helical" evidence="1">
    <location>
        <begin position="411"/>
        <end position="431"/>
    </location>
</feature>
<feature type="transmembrane region" description="Helical" evidence="1">
    <location>
        <begin position="467"/>
        <end position="487"/>
    </location>
</feature>
<name>NU2C_GLOC7</name>
<organism>
    <name type="scientific">Gloeothece citriformis (strain PCC 7424)</name>
    <name type="common">Cyanothece sp. (strain PCC 7424)</name>
    <dbReference type="NCBI Taxonomy" id="65393"/>
    <lineage>
        <taxon>Bacteria</taxon>
        <taxon>Bacillati</taxon>
        <taxon>Cyanobacteriota</taxon>
        <taxon>Cyanophyceae</taxon>
        <taxon>Oscillatoriophycideae</taxon>
        <taxon>Chroococcales</taxon>
        <taxon>Aphanothecaceae</taxon>
        <taxon>Gloeothece</taxon>
        <taxon>Gloeothece citriformis</taxon>
    </lineage>
</organism>
<sequence>MDFSSFVASQLNAGTIWPEGIIIITLMVILIGDLIVGRSSKTWLPYVAIAGLLAAVVALYFEWDNPNTLSFLGAFNGDNLSIVFRAIVALSTTVTILMSVRYVEQSGTSLAEFIAIMLTATLGGMFLSGANELVMIFISLEMLSISSYLMTGYMKRDSRSNEAALKYLLIGASSSAIFLYGVSLLYGLSGGETTLDAIAAKITNVNGGQSLGLAIALVFVIAGIAFKISAVPFHQWTPDVYEGSPTPVVAFLSVGSKAAGFALAIRLLVTAFALVSEQWHFIFTALAILSMVLGNVVALAQTSMKRMLAYSSIGQAGFVMIGLTANSDAGYSSMIFYLLIYLFMNLGAFICIILFALRTGTDQISEYSGLYQKDPLLTLGLSICLLSLGGIPPLAGFFGKIYLFWAGWQSGLYGLVLLGLVTSVISIYYYIRVVKMMVVKEPQDMSESVKNYPEIRWNLPGMRPLQVGLVLSVIATSLAGILSNPLFNLATDSVTSTPILQSAVISTQISQADK</sequence>
<comment type="function">
    <text evidence="1">NDH-1 shuttles electrons from an unknown electron donor, via FMN and iron-sulfur (Fe-S) centers, to quinones in the respiratory and/or the photosynthetic chain. The immediate electron acceptor for the enzyme in this species is believed to be plastoquinone. Couples the redox reaction to proton translocation, and thus conserves the redox energy in a proton gradient. Cyanobacterial NDH-1 also plays a role in inorganic carbon-concentration.</text>
</comment>
<comment type="catalytic activity">
    <reaction evidence="1">
        <text>a plastoquinone + NADH + (n+1) H(+)(in) = a plastoquinol + NAD(+) + n H(+)(out)</text>
        <dbReference type="Rhea" id="RHEA:42608"/>
        <dbReference type="Rhea" id="RHEA-COMP:9561"/>
        <dbReference type="Rhea" id="RHEA-COMP:9562"/>
        <dbReference type="ChEBI" id="CHEBI:15378"/>
        <dbReference type="ChEBI" id="CHEBI:17757"/>
        <dbReference type="ChEBI" id="CHEBI:57540"/>
        <dbReference type="ChEBI" id="CHEBI:57945"/>
        <dbReference type="ChEBI" id="CHEBI:62192"/>
    </reaction>
</comment>
<comment type="catalytic activity">
    <reaction evidence="1">
        <text>a plastoquinone + NADPH + (n+1) H(+)(in) = a plastoquinol + NADP(+) + n H(+)(out)</text>
        <dbReference type="Rhea" id="RHEA:42612"/>
        <dbReference type="Rhea" id="RHEA-COMP:9561"/>
        <dbReference type="Rhea" id="RHEA-COMP:9562"/>
        <dbReference type="ChEBI" id="CHEBI:15378"/>
        <dbReference type="ChEBI" id="CHEBI:17757"/>
        <dbReference type="ChEBI" id="CHEBI:57783"/>
        <dbReference type="ChEBI" id="CHEBI:58349"/>
        <dbReference type="ChEBI" id="CHEBI:62192"/>
    </reaction>
</comment>
<comment type="subunit">
    <text evidence="1">NDH-1 can be composed of about 15 different subunits; different subcomplexes with different compositions have been identified which probably have different functions.</text>
</comment>
<comment type="subcellular location">
    <subcellularLocation>
        <location evidence="1">Cellular thylakoid membrane</location>
        <topology evidence="1">Multi-pass membrane protein</topology>
    </subcellularLocation>
</comment>
<comment type="similarity">
    <text evidence="1">Belongs to the complex I subunit 2 family.</text>
</comment>
<protein>
    <recommendedName>
        <fullName evidence="1">NAD(P)H-quinone oxidoreductase subunit 2</fullName>
        <ecNumber evidence="1">7.1.1.-</ecNumber>
    </recommendedName>
    <alternativeName>
        <fullName evidence="1">NAD(P)H dehydrogenase subunit 2</fullName>
    </alternativeName>
    <alternativeName>
        <fullName evidence="1">NADH-plastoquinone oxidoreductase subunit 2</fullName>
    </alternativeName>
    <alternativeName>
        <fullName evidence="1">NDH-1, subunit 2</fullName>
    </alternativeName>
</protein>
<keyword id="KW-0472">Membrane</keyword>
<keyword id="KW-0520">NAD</keyword>
<keyword id="KW-0521">NADP</keyword>
<keyword id="KW-0618">Plastoquinone</keyword>
<keyword id="KW-0874">Quinone</keyword>
<keyword id="KW-1185">Reference proteome</keyword>
<keyword id="KW-0793">Thylakoid</keyword>
<keyword id="KW-1278">Translocase</keyword>
<keyword id="KW-0812">Transmembrane</keyword>
<keyword id="KW-1133">Transmembrane helix</keyword>
<keyword id="KW-0813">Transport</keyword>